<proteinExistence type="evidence at protein level"/>
<name>MSL1_ARATH</name>
<reference key="1">
    <citation type="journal article" date="1999" name="Nature">
        <title>Sequence and analysis of chromosome 4 of the plant Arabidopsis thaliana.</title>
        <authorList>
            <person name="Mayer K.F.X."/>
            <person name="Schueller C."/>
            <person name="Wambutt R."/>
            <person name="Murphy G."/>
            <person name="Volckaert G."/>
            <person name="Pohl T."/>
            <person name="Duesterhoeft A."/>
            <person name="Stiekema W."/>
            <person name="Entian K.-D."/>
            <person name="Terryn N."/>
            <person name="Harris B."/>
            <person name="Ansorge W."/>
            <person name="Brandt P."/>
            <person name="Grivell L.A."/>
            <person name="Rieger M."/>
            <person name="Weichselgartner M."/>
            <person name="de Simone V."/>
            <person name="Obermaier B."/>
            <person name="Mache R."/>
            <person name="Mueller M."/>
            <person name="Kreis M."/>
            <person name="Delseny M."/>
            <person name="Puigdomenech P."/>
            <person name="Watson M."/>
            <person name="Schmidtheini T."/>
            <person name="Reichert B."/>
            <person name="Portetelle D."/>
            <person name="Perez-Alonso M."/>
            <person name="Boutry M."/>
            <person name="Bancroft I."/>
            <person name="Vos P."/>
            <person name="Hoheisel J."/>
            <person name="Zimmermann W."/>
            <person name="Wedler H."/>
            <person name="Ridley P."/>
            <person name="Langham S.-A."/>
            <person name="McCullagh B."/>
            <person name="Bilham L."/>
            <person name="Robben J."/>
            <person name="van der Schueren J."/>
            <person name="Grymonprez B."/>
            <person name="Chuang Y.-J."/>
            <person name="Vandenbussche F."/>
            <person name="Braeken M."/>
            <person name="Weltjens I."/>
            <person name="Voet M."/>
            <person name="Bastiaens I."/>
            <person name="Aert R."/>
            <person name="Defoor E."/>
            <person name="Weitzenegger T."/>
            <person name="Bothe G."/>
            <person name="Ramsperger U."/>
            <person name="Hilbert H."/>
            <person name="Braun M."/>
            <person name="Holzer E."/>
            <person name="Brandt A."/>
            <person name="Peters S."/>
            <person name="van Staveren M."/>
            <person name="Dirkse W."/>
            <person name="Mooijman P."/>
            <person name="Klein Lankhorst R."/>
            <person name="Rose M."/>
            <person name="Hauf J."/>
            <person name="Koetter P."/>
            <person name="Berneiser S."/>
            <person name="Hempel S."/>
            <person name="Feldpausch M."/>
            <person name="Lamberth S."/>
            <person name="Van den Daele H."/>
            <person name="De Keyser A."/>
            <person name="Buysshaert C."/>
            <person name="Gielen J."/>
            <person name="Villarroel R."/>
            <person name="De Clercq R."/>
            <person name="van Montagu M."/>
            <person name="Rogers J."/>
            <person name="Cronin A."/>
            <person name="Quail M.A."/>
            <person name="Bray-Allen S."/>
            <person name="Clark L."/>
            <person name="Doggett J."/>
            <person name="Hall S."/>
            <person name="Kay M."/>
            <person name="Lennard N."/>
            <person name="McLay K."/>
            <person name="Mayes R."/>
            <person name="Pettett A."/>
            <person name="Rajandream M.A."/>
            <person name="Lyne M."/>
            <person name="Benes V."/>
            <person name="Rechmann S."/>
            <person name="Borkova D."/>
            <person name="Bloecker H."/>
            <person name="Scharfe M."/>
            <person name="Grimm M."/>
            <person name="Loehnert T.-H."/>
            <person name="Dose S."/>
            <person name="de Haan M."/>
            <person name="Maarse A.C."/>
            <person name="Schaefer M."/>
            <person name="Mueller-Auer S."/>
            <person name="Gabel C."/>
            <person name="Fuchs M."/>
            <person name="Fartmann B."/>
            <person name="Granderath K."/>
            <person name="Dauner D."/>
            <person name="Herzl A."/>
            <person name="Neumann S."/>
            <person name="Argiriou A."/>
            <person name="Vitale D."/>
            <person name="Liguori R."/>
            <person name="Piravandi E."/>
            <person name="Massenet O."/>
            <person name="Quigley F."/>
            <person name="Clabauld G."/>
            <person name="Muendlein A."/>
            <person name="Felber R."/>
            <person name="Schnabl S."/>
            <person name="Hiller R."/>
            <person name="Schmidt W."/>
            <person name="Lecharny A."/>
            <person name="Aubourg S."/>
            <person name="Chefdor F."/>
            <person name="Cooke R."/>
            <person name="Berger C."/>
            <person name="Monfort A."/>
            <person name="Casacuberta E."/>
            <person name="Gibbons T."/>
            <person name="Weber N."/>
            <person name="Vandenbol M."/>
            <person name="Bargues M."/>
            <person name="Terol J."/>
            <person name="Torres A."/>
            <person name="Perez-Perez A."/>
            <person name="Purnelle B."/>
            <person name="Bent E."/>
            <person name="Johnson S."/>
            <person name="Tacon D."/>
            <person name="Jesse T."/>
            <person name="Heijnen L."/>
            <person name="Schwarz S."/>
            <person name="Scholler P."/>
            <person name="Heber S."/>
            <person name="Francs P."/>
            <person name="Bielke C."/>
            <person name="Frishman D."/>
            <person name="Haase D."/>
            <person name="Lemcke K."/>
            <person name="Mewes H.-W."/>
            <person name="Stocker S."/>
            <person name="Zaccaria P."/>
            <person name="Bevan M."/>
            <person name="Wilson R.K."/>
            <person name="de la Bastide M."/>
            <person name="Habermann K."/>
            <person name="Parnell L."/>
            <person name="Dedhia N."/>
            <person name="Gnoj L."/>
            <person name="Schutz K."/>
            <person name="Huang E."/>
            <person name="Spiegel L."/>
            <person name="Sekhon M."/>
            <person name="Murray J."/>
            <person name="Sheet P."/>
            <person name="Cordes M."/>
            <person name="Abu-Threideh J."/>
            <person name="Stoneking T."/>
            <person name="Kalicki J."/>
            <person name="Graves T."/>
            <person name="Harmon G."/>
            <person name="Edwards J."/>
            <person name="Latreille P."/>
            <person name="Courtney L."/>
            <person name="Cloud J."/>
            <person name="Abbott A."/>
            <person name="Scott K."/>
            <person name="Johnson D."/>
            <person name="Minx P."/>
            <person name="Bentley D."/>
            <person name="Fulton B."/>
            <person name="Miller N."/>
            <person name="Greco T."/>
            <person name="Kemp K."/>
            <person name="Kramer J."/>
            <person name="Fulton L."/>
            <person name="Mardis E."/>
            <person name="Dante M."/>
            <person name="Pepin K."/>
            <person name="Hillier L.W."/>
            <person name="Nelson J."/>
            <person name="Spieth J."/>
            <person name="Ryan E."/>
            <person name="Andrews S."/>
            <person name="Geisel C."/>
            <person name="Layman D."/>
            <person name="Du H."/>
            <person name="Ali J."/>
            <person name="Berghoff A."/>
            <person name="Jones K."/>
            <person name="Drone K."/>
            <person name="Cotton M."/>
            <person name="Joshu C."/>
            <person name="Antonoiu B."/>
            <person name="Zidanic M."/>
            <person name="Strong C."/>
            <person name="Sun H."/>
            <person name="Lamar B."/>
            <person name="Yordan C."/>
            <person name="Ma P."/>
            <person name="Zhong J."/>
            <person name="Preston R."/>
            <person name="Vil D."/>
            <person name="Shekher M."/>
            <person name="Matero A."/>
            <person name="Shah R."/>
            <person name="Swaby I.K."/>
            <person name="O'Shaughnessy A."/>
            <person name="Rodriguez M."/>
            <person name="Hoffman J."/>
            <person name="Till S."/>
            <person name="Granat S."/>
            <person name="Shohdy N."/>
            <person name="Hasegawa A."/>
            <person name="Hameed A."/>
            <person name="Lodhi M."/>
            <person name="Johnson A."/>
            <person name="Chen E."/>
            <person name="Marra M.A."/>
            <person name="Martienssen R."/>
            <person name="McCombie W.R."/>
        </authorList>
    </citation>
    <scope>NUCLEOTIDE SEQUENCE [LARGE SCALE GENOMIC DNA]</scope>
    <source>
        <strain>cv. Columbia</strain>
    </source>
</reference>
<reference key="2">
    <citation type="journal article" date="2017" name="Plant J.">
        <title>Araport11: a complete reannotation of the Arabidopsis thaliana reference genome.</title>
        <authorList>
            <person name="Cheng C.Y."/>
            <person name="Krishnakumar V."/>
            <person name="Chan A.P."/>
            <person name="Thibaud-Nissen F."/>
            <person name="Schobel S."/>
            <person name="Town C.D."/>
        </authorList>
    </citation>
    <scope>GENOME REANNOTATION</scope>
    <source>
        <strain>cv. Columbia</strain>
    </source>
</reference>
<reference key="3">
    <citation type="journal article" date="2003" name="Science">
        <title>Empirical analysis of transcriptional activity in the Arabidopsis genome.</title>
        <authorList>
            <person name="Yamada K."/>
            <person name="Lim J."/>
            <person name="Dale J.M."/>
            <person name="Chen H."/>
            <person name="Shinn P."/>
            <person name="Palm C.J."/>
            <person name="Southwick A.M."/>
            <person name="Wu H.C."/>
            <person name="Kim C.J."/>
            <person name="Nguyen M."/>
            <person name="Pham P.K."/>
            <person name="Cheuk R.F."/>
            <person name="Karlin-Newmann G."/>
            <person name="Liu S.X."/>
            <person name="Lam B."/>
            <person name="Sakano H."/>
            <person name="Wu T."/>
            <person name="Yu G."/>
            <person name="Miranda M."/>
            <person name="Quach H.L."/>
            <person name="Tripp M."/>
            <person name="Chang C.H."/>
            <person name="Lee J.M."/>
            <person name="Toriumi M.J."/>
            <person name="Chan M.M."/>
            <person name="Tang C.C."/>
            <person name="Onodera C.S."/>
            <person name="Deng J.M."/>
            <person name="Akiyama K."/>
            <person name="Ansari Y."/>
            <person name="Arakawa T."/>
            <person name="Banh J."/>
            <person name="Banno F."/>
            <person name="Bowser L."/>
            <person name="Brooks S.Y."/>
            <person name="Carninci P."/>
            <person name="Chao Q."/>
            <person name="Choy N."/>
            <person name="Enju A."/>
            <person name="Goldsmith A.D."/>
            <person name="Gurjal M."/>
            <person name="Hansen N.F."/>
            <person name="Hayashizaki Y."/>
            <person name="Johnson-Hopson C."/>
            <person name="Hsuan V.W."/>
            <person name="Iida K."/>
            <person name="Karnes M."/>
            <person name="Khan S."/>
            <person name="Koesema E."/>
            <person name="Ishida J."/>
            <person name="Jiang P.X."/>
            <person name="Jones T."/>
            <person name="Kawai J."/>
            <person name="Kamiya A."/>
            <person name="Meyers C."/>
            <person name="Nakajima M."/>
            <person name="Narusaka M."/>
            <person name="Seki M."/>
            <person name="Sakurai T."/>
            <person name="Satou M."/>
            <person name="Tamse R."/>
            <person name="Vaysberg M."/>
            <person name="Wallender E.K."/>
            <person name="Wong C."/>
            <person name="Yamamura Y."/>
            <person name="Yuan S."/>
            <person name="Shinozaki K."/>
            <person name="Davis R.W."/>
            <person name="Theologis A."/>
            <person name="Ecker J.R."/>
        </authorList>
    </citation>
    <scope>NUCLEOTIDE SEQUENCE [LARGE SCALE MRNA]</scope>
    <source>
        <strain>cv. Columbia</strain>
    </source>
</reference>
<reference key="4">
    <citation type="submission" date="2004-09" db="EMBL/GenBank/DDBJ databases">
        <title>Large-scale analysis of RIKEN Arabidopsis full-length (RAFL) cDNAs.</title>
        <authorList>
            <person name="Totoki Y."/>
            <person name="Seki M."/>
            <person name="Ishida J."/>
            <person name="Nakajima M."/>
            <person name="Enju A."/>
            <person name="Kamiya A."/>
            <person name="Narusaka M."/>
            <person name="Shin-i T."/>
            <person name="Nakagawa M."/>
            <person name="Sakamoto N."/>
            <person name="Oishi K."/>
            <person name="Kohara Y."/>
            <person name="Kobayashi M."/>
            <person name="Toyoda A."/>
            <person name="Sakaki Y."/>
            <person name="Sakurai T."/>
            <person name="Iida K."/>
            <person name="Akiyama K."/>
            <person name="Satou M."/>
            <person name="Toyoda T."/>
            <person name="Konagaya A."/>
            <person name="Carninci P."/>
            <person name="Kawai J."/>
            <person name="Hayashizaki Y."/>
            <person name="Shinozaki K."/>
        </authorList>
    </citation>
    <scope>NUCLEOTIDE SEQUENCE [LARGE SCALE MRNA]</scope>
    <source>
        <strain>cv. Columbia</strain>
    </source>
</reference>
<reference key="5">
    <citation type="journal article" date="2003" name="Microbiol. Mol. Biol. Rev.">
        <title>Two families of mechanosensitive channel proteins.</title>
        <authorList>
            <person name="Pivetti C.D."/>
            <person name="Yen M.R."/>
            <person name="Miller S."/>
            <person name="Busch W."/>
            <person name="Tseng Y.H."/>
            <person name="Booth I.R."/>
            <person name="Saier M.H. Jr."/>
        </authorList>
    </citation>
    <scope>GENE FAMILY</scope>
</reference>
<reference key="6">
    <citation type="book" date="2007" name="Mechanosensitive Ion Channels, Part A">
        <title>MscS-like proteins in plants.</title>
        <editorList>
            <person name="Hamill O.P."/>
        </editorList>
        <authorList>
            <person name="Haswell E.S."/>
        </authorList>
    </citation>
    <scope>REVIEW</scope>
    <scope>GENE FAMILY</scope>
    <scope>NOMENCLATURE</scope>
</reference>
<sequence>MAGVRLSLLKSIQRSIKPHATAKSCSGLLNSHARAFTCGNLLDGPKASPSMISFSSNIRLHNDAKPFNYLGHSSYARAFSSKSDDFGSIVASGVTGSGDGNGNGNDWVEKAKDVLQTSVDAVTETAKKTKDVSDEMIPHVQQFLDSNPYLKDVIVPVSLTMTGTLFAWVVMPRILRRFHTYAMQSSAKLLPVGFSNEDVPYEKSFWGALEDPARYLVTFIAFAQIAAMVAPTTIAAQYFSPTVKGAVILSLVWFLYRWKTNVITRMLSAKSFGGLDREKVLTLDKVSSVGLFAIGLMASAEACGVAVQSILTVGGVGGVATAFAARDILGNVLSGLSMQFSRPFSMGDTIKAGSVEGQVIEMGLTTTSLLNAEKFPVLVPNSLFSSQVIVNKSRAQWRAIASKIPLQIDDLDMIPQISNEIKEMLRSNTKVFLGKEAPHCYLSRVEKSFAELTIGCNLIRMGKEELYNTQQEVLLEAVKIIKKHGVSLGTTWDNSTL</sequence>
<comment type="function">
    <text evidence="1">Mechanosensitive channel that opens in response to stretch forces in the membrane lipid bilayer.</text>
</comment>
<comment type="subcellular location">
    <subcellularLocation>
        <location evidence="3">Mitochondrion membrane</location>
        <topology evidence="3">Multi-pass membrane protein</topology>
    </subcellularLocation>
</comment>
<comment type="similarity">
    <text evidence="3">Belongs to the MscS (TC 1.A.23) family.</text>
</comment>
<comment type="sequence caution" evidence="3">
    <conflict type="erroneous gene model prediction">
        <sequence resource="EMBL-CDS" id="AAB62830"/>
    </conflict>
</comment>
<comment type="sequence caution" evidence="3">
    <conflict type="erroneous gene model prediction">
        <sequence resource="EMBL-CDS" id="AAF02788"/>
    </conflict>
</comment>
<comment type="sequence caution" evidence="3">
    <conflict type="erroneous gene model prediction">
        <sequence resource="EMBL-CDS" id="CAB80787"/>
    </conflict>
</comment>
<dbReference type="EMBL" id="AF013293">
    <property type="protein sequence ID" value="AAB62830.1"/>
    <property type="status" value="ALT_SEQ"/>
    <property type="molecule type" value="Genomic_DNA"/>
</dbReference>
<dbReference type="EMBL" id="AF195115">
    <property type="protein sequence ID" value="AAF02788.1"/>
    <property type="status" value="ALT_SEQ"/>
    <property type="molecule type" value="Genomic_DNA"/>
</dbReference>
<dbReference type="EMBL" id="AL161471">
    <property type="protein sequence ID" value="CAB80787.1"/>
    <property type="status" value="ALT_SEQ"/>
    <property type="molecule type" value="Genomic_DNA"/>
</dbReference>
<dbReference type="EMBL" id="CP002687">
    <property type="protein sequence ID" value="AEE81850.1"/>
    <property type="molecule type" value="Genomic_DNA"/>
</dbReference>
<dbReference type="EMBL" id="AY064027">
    <property type="protein sequence ID" value="AAL36383.1"/>
    <property type="molecule type" value="mRNA"/>
</dbReference>
<dbReference type="EMBL" id="AY096611">
    <property type="protein sequence ID" value="AAM20261.1"/>
    <property type="molecule type" value="mRNA"/>
</dbReference>
<dbReference type="EMBL" id="AK176463">
    <property type="protein sequence ID" value="BAD44226.1"/>
    <property type="molecule type" value="mRNA"/>
</dbReference>
<dbReference type="EMBL" id="AK176579">
    <property type="protein sequence ID" value="BAD44342.1"/>
    <property type="molecule type" value="mRNA"/>
</dbReference>
<dbReference type="PIR" id="T01542">
    <property type="entry name" value="T01542"/>
</dbReference>
<dbReference type="RefSeq" id="NP_567165.2">
    <property type="nucleotide sequence ID" value="NM_116250.5"/>
</dbReference>
<dbReference type="PDB" id="6LYP">
    <property type="method" value="EM"/>
    <property type="resolution" value="3.30 A"/>
    <property type="chains" value="A/B/C/D/E/F/G=1-497"/>
</dbReference>
<dbReference type="PDB" id="6VXM">
    <property type="method" value="EM"/>
    <property type="resolution" value="3.06 A"/>
    <property type="chains" value="A/B/C/D/E/F/G=79-497"/>
</dbReference>
<dbReference type="PDB" id="6VXN">
    <property type="method" value="EM"/>
    <property type="resolution" value="2.96 A"/>
    <property type="chains" value="A/B/C/D/E/F/G=79-497"/>
</dbReference>
<dbReference type="PDB" id="6VXP">
    <property type="method" value="EM"/>
    <property type="resolution" value="3.39 A"/>
    <property type="chains" value="A/B/C/D/E/F/G=79-497"/>
</dbReference>
<dbReference type="PDBsum" id="6LYP"/>
<dbReference type="PDBsum" id="6VXM"/>
<dbReference type="PDBsum" id="6VXN"/>
<dbReference type="PDBsum" id="6VXP"/>
<dbReference type="EMDB" id="EMD-21444"/>
<dbReference type="EMDB" id="EMD-21445"/>
<dbReference type="EMDB" id="EMD-21447"/>
<dbReference type="EMDB" id="EMD-30017"/>
<dbReference type="SMR" id="Q8VZL4"/>
<dbReference type="FunCoup" id="Q8VZL4">
    <property type="interactions" value="336"/>
</dbReference>
<dbReference type="STRING" id="3702.Q8VZL4"/>
<dbReference type="TCDB" id="1.A.23.4.11">
    <property type="family name" value="the small conductance mechanosensitive ion channel (mscs) family"/>
</dbReference>
<dbReference type="iPTMnet" id="Q8VZL4"/>
<dbReference type="PaxDb" id="3702-AT4G00290.1"/>
<dbReference type="ProteomicsDB" id="250956"/>
<dbReference type="EnsemblPlants" id="AT4G00290.1">
    <property type="protein sequence ID" value="AT4G00290.1"/>
    <property type="gene ID" value="AT4G00290"/>
</dbReference>
<dbReference type="GeneID" id="828077"/>
<dbReference type="Gramene" id="AT4G00290.1">
    <property type="protein sequence ID" value="AT4G00290.1"/>
    <property type="gene ID" value="AT4G00290"/>
</dbReference>
<dbReference type="KEGG" id="ath:AT4G00290"/>
<dbReference type="Araport" id="AT4G00290"/>
<dbReference type="TAIR" id="AT4G00290">
    <property type="gene designation" value="MSL1"/>
</dbReference>
<dbReference type="eggNOG" id="ENOG502QRDM">
    <property type="taxonomic scope" value="Eukaryota"/>
</dbReference>
<dbReference type="HOGENOM" id="CLU_024228_1_0_1"/>
<dbReference type="InParanoid" id="Q8VZL4"/>
<dbReference type="OMA" id="NIMEICL"/>
<dbReference type="PhylomeDB" id="Q8VZL4"/>
<dbReference type="PRO" id="PR:Q8VZL4"/>
<dbReference type="Proteomes" id="UP000006548">
    <property type="component" value="Chromosome 4"/>
</dbReference>
<dbReference type="ExpressionAtlas" id="Q8VZL4">
    <property type="expression patterns" value="baseline and differential"/>
</dbReference>
<dbReference type="GO" id="GO:0009507">
    <property type="term" value="C:chloroplast"/>
    <property type="evidence" value="ECO:0007005"/>
    <property type="project" value="TAIR"/>
</dbReference>
<dbReference type="GO" id="GO:0009941">
    <property type="term" value="C:chloroplast envelope"/>
    <property type="evidence" value="ECO:0007005"/>
    <property type="project" value="TAIR"/>
</dbReference>
<dbReference type="GO" id="GO:0005743">
    <property type="term" value="C:mitochondrial inner membrane"/>
    <property type="evidence" value="ECO:0000314"/>
    <property type="project" value="TAIR"/>
</dbReference>
<dbReference type="GO" id="GO:0005739">
    <property type="term" value="C:mitochondrion"/>
    <property type="evidence" value="ECO:0007005"/>
    <property type="project" value="TAIR"/>
</dbReference>
<dbReference type="GO" id="GO:0008381">
    <property type="term" value="F:mechanosensitive monoatomic ion channel activity"/>
    <property type="evidence" value="ECO:0000314"/>
    <property type="project" value="TAIR"/>
</dbReference>
<dbReference type="GO" id="GO:0034599">
    <property type="term" value="P:cellular response to oxidative stress"/>
    <property type="evidence" value="ECO:0000315"/>
    <property type="project" value="TAIR"/>
</dbReference>
<dbReference type="Gene3D" id="1.10.287.1260">
    <property type="match status" value="1"/>
</dbReference>
<dbReference type="Gene3D" id="2.30.30.60">
    <property type="match status" value="1"/>
</dbReference>
<dbReference type="InterPro" id="IPR010920">
    <property type="entry name" value="LSM_dom_sf"/>
</dbReference>
<dbReference type="InterPro" id="IPR023408">
    <property type="entry name" value="MscS_beta-dom_sf"/>
</dbReference>
<dbReference type="InterPro" id="IPR006685">
    <property type="entry name" value="MscS_channel_2nd"/>
</dbReference>
<dbReference type="InterPro" id="IPR011014">
    <property type="entry name" value="MscS_channel_TM-2"/>
</dbReference>
<dbReference type="PANTHER" id="PTHR30566:SF5">
    <property type="entry name" value="MECHANOSENSITIVE ION CHANNEL PROTEIN 1, MITOCHONDRIAL-RELATED"/>
    <property type="match status" value="1"/>
</dbReference>
<dbReference type="PANTHER" id="PTHR30566">
    <property type="entry name" value="YNAI-RELATED MECHANOSENSITIVE ION CHANNEL"/>
    <property type="match status" value="1"/>
</dbReference>
<dbReference type="Pfam" id="PF00924">
    <property type="entry name" value="MS_channel_2nd"/>
    <property type="match status" value="1"/>
</dbReference>
<dbReference type="SUPFAM" id="SSF82861">
    <property type="entry name" value="Mechanosensitive channel protein MscS (YggB), transmembrane region"/>
    <property type="match status" value="1"/>
</dbReference>
<dbReference type="SUPFAM" id="SSF50182">
    <property type="entry name" value="Sm-like ribonucleoproteins"/>
    <property type="match status" value="1"/>
</dbReference>
<keyword id="KW-0002">3D-structure</keyword>
<keyword id="KW-0407">Ion channel</keyword>
<keyword id="KW-0406">Ion transport</keyword>
<keyword id="KW-0472">Membrane</keyword>
<keyword id="KW-0496">Mitochondrion</keyword>
<keyword id="KW-1185">Reference proteome</keyword>
<keyword id="KW-0809">Transit peptide</keyword>
<keyword id="KW-0812">Transmembrane</keyword>
<keyword id="KW-1133">Transmembrane helix</keyword>
<keyword id="KW-0813">Transport</keyword>
<accession>Q8VZL4</accession>
<accession>O23073</accession>
<gene>
    <name type="primary">MSL1</name>
    <name type="ordered locus">At4g00290</name>
    <name type="ORF">A_IG005I10.9</name>
    <name type="ORF">F5I10.9</name>
</gene>
<feature type="transit peptide" description="Mitochondrion" evidence="2">
    <location>
        <begin position="1"/>
        <end position="86"/>
    </location>
</feature>
<feature type="chain" id="PRO_0000415324" description="Mechanosensitive ion channel protein 1, mitochondrial">
    <location>
        <begin position="87"/>
        <end position="497"/>
    </location>
</feature>
<feature type="transmembrane region" description="Helical" evidence="2">
    <location>
        <begin position="152"/>
        <end position="172"/>
    </location>
</feature>
<feature type="transmembrane region" description="Helical" evidence="2">
    <location>
        <begin position="216"/>
        <end position="236"/>
    </location>
</feature>
<feature type="transmembrane region" description="Helical" evidence="2">
    <location>
        <begin position="238"/>
        <end position="258"/>
    </location>
</feature>
<feature type="transmembrane region" description="Helical" evidence="2">
    <location>
        <begin position="280"/>
        <end position="300"/>
    </location>
</feature>
<feature type="transmembrane region" description="Helical" evidence="2">
    <location>
        <begin position="305"/>
        <end position="325"/>
    </location>
</feature>
<feature type="helix" evidence="5">
    <location>
        <begin position="205"/>
        <end position="226"/>
    </location>
</feature>
<feature type="turn" evidence="4">
    <location>
        <begin position="236"/>
        <end position="238"/>
    </location>
</feature>
<feature type="helix" evidence="5">
    <location>
        <begin position="239"/>
        <end position="266"/>
    </location>
</feature>
<feature type="helix" evidence="5">
    <location>
        <begin position="278"/>
        <end position="299"/>
    </location>
</feature>
<feature type="helix" evidence="4">
    <location>
        <begin position="307"/>
        <end position="314"/>
    </location>
</feature>
<feature type="helix" evidence="5">
    <location>
        <begin position="316"/>
        <end position="340"/>
    </location>
</feature>
<feature type="strand" evidence="5">
    <location>
        <begin position="349"/>
        <end position="352"/>
    </location>
</feature>
<feature type="strand" evidence="5">
    <location>
        <begin position="355"/>
        <end position="362"/>
    </location>
</feature>
<feature type="strand" evidence="5">
    <location>
        <begin position="364"/>
        <end position="370"/>
    </location>
</feature>
<feature type="strand" evidence="5">
    <location>
        <begin position="376"/>
        <end position="380"/>
    </location>
</feature>
<feature type="helix" evidence="5">
    <location>
        <begin position="381"/>
        <end position="384"/>
    </location>
</feature>
<feature type="strand" evidence="5">
    <location>
        <begin position="385"/>
        <end position="387"/>
    </location>
</feature>
<feature type="strand" evidence="5">
    <location>
        <begin position="389"/>
        <end position="391"/>
    </location>
</feature>
<feature type="strand" evidence="5">
    <location>
        <begin position="396"/>
        <end position="407"/>
    </location>
</feature>
<feature type="helix" evidence="5">
    <location>
        <begin position="411"/>
        <end position="413"/>
    </location>
</feature>
<feature type="helix" evidence="5">
    <location>
        <begin position="414"/>
        <end position="427"/>
    </location>
</feature>
<feature type="strand" evidence="5">
    <location>
        <begin position="428"/>
        <end position="431"/>
    </location>
</feature>
<feature type="strand" evidence="5">
    <location>
        <begin position="434"/>
        <end position="436"/>
    </location>
</feature>
<feature type="strand" evidence="5">
    <location>
        <begin position="439"/>
        <end position="446"/>
    </location>
</feature>
<feature type="strand" evidence="5">
    <location>
        <begin position="449"/>
        <end position="460"/>
    </location>
</feature>
<feature type="helix" evidence="5">
    <location>
        <begin position="463"/>
        <end position="483"/>
    </location>
</feature>
<organism>
    <name type="scientific">Arabidopsis thaliana</name>
    <name type="common">Mouse-ear cress</name>
    <dbReference type="NCBI Taxonomy" id="3702"/>
    <lineage>
        <taxon>Eukaryota</taxon>
        <taxon>Viridiplantae</taxon>
        <taxon>Streptophyta</taxon>
        <taxon>Embryophyta</taxon>
        <taxon>Tracheophyta</taxon>
        <taxon>Spermatophyta</taxon>
        <taxon>Magnoliopsida</taxon>
        <taxon>eudicotyledons</taxon>
        <taxon>Gunneridae</taxon>
        <taxon>Pentapetalae</taxon>
        <taxon>rosids</taxon>
        <taxon>malvids</taxon>
        <taxon>Brassicales</taxon>
        <taxon>Brassicaceae</taxon>
        <taxon>Camelineae</taxon>
        <taxon>Arabidopsis</taxon>
    </lineage>
</organism>
<protein>
    <recommendedName>
        <fullName>Mechanosensitive ion channel protein 1, mitochondrial</fullName>
    </recommendedName>
    <alternativeName>
        <fullName>Mechanosensitive channel of small conductance-like 1</fullName>
    </alternativeName>
    <alternativeName>
        <fullName>MscS-Like protein 1</fullName>
    </alternativeName>
</protein>
<evidence type="ECO:0000250" key="1"/>
<evidence type="ECO:0000255" key="2"/>
<evidence type="ECO:0000305" key="3"/>
<evidence type="ECO:0007829" key="4">
    <source>
        <dbReference type="PDB" id="6LYP"/>
    </source>
</evidence>
<evidence type="ECO:0007829" key="5">
    <source>
        <dbReference type="PDB" id="6VXN"/>
    </source>
</evidence>